<feature type="chain" id="PRO_0000390224" description="NADH-quinone oxidoreductase subunit K">
    <location>
        <begin position="1"/>
        <end position="100"/>
    </location>
</feature>
<feature type="transmembrane region" description="Helical" evidence="1">
    <location>
        <begin position="4"/>
        <end position="24"/>
    </location>
</feature>
<feature type="transmembrane region" description="Helical" evidence="1">
    <location>
        <begin position="28"/>
        <end position="48"/>
    </location>
</feature>
<feature type="transmembrane region" description="Helical" evidence="1">
    <location>
        <begin position="60"/>
        <end position="80"/>
    </location>
</feature>
<keyword id="KW-0997">Cell inner membrane</keyword>
<keyword id="KW-1003">Cell membrane</keyword>
<keyword id="KW-0472">Membrane</keyword>
<keyword id="KW-0520">NAD</keyword>
<keyword id="KW-0874">Quinone</keyword>
<keyword id="KW-1278">Translocase</keyword>
<keyword id="KW-0812">Transmembrane</keyword>
<keyword id="KW-1133">Transmembrane helix</keyword>
<keyword id="KW-0813">Transport</keyword>
<keyword id="KW-0830">Ubiquinone</keyword>
<proteinExistence type="inferred from homology"/>
<gene>
    <name evidence="1" type="primary">nuoK</name>
    <name type="ordered locus">SeHA_C2558</name>
</gene>
<reference key="1">
    <citation type="journal article" date="2011" name="J. Bacteriol.">
        <title>Comparative genomics of 28 Salmonella enterica isolates: evidence for CRISPR-mediated adaptive sublineage evolution.</title>
        <authorList>
            <person name="Fricke W.F."/>
            <person name="Mammel M.K."/>
            <person name="McDermott P.F."/>
            <person name="Tartera C."/>
            <person name="White D.G."/>
            <person name="Leclerc J.E."/>
            <person name="Ravel J."/>
            <person name="Cebula T.A."/>
        </authorList>
    </citation>
    <scope>NUCLEOTIDE SEQUENCE [LARGE SCALE GENOMIC DNA]</scope>
    <source>
        <strain>SL476</strain>
    </source>
</reference>
<dbReference type="EC" id="7.1.1.-" evidence="1"/>
<dbReference type="EMBL" id="CP001120">
    <property type="protein sequence ID" value="ACF68206.1"/>
    <property type="molecule type" value="Genomic_DNA"/>
</dbReference>
<dbReference type="RefSeq" id="WP_000612687.1">
    <property type="nucleotide sequence ID" value="NC_011083.1"/>
</dbReference>
<dbReference type="SMR" id="B4TBI5"/>
<dbReference type="KEGG" id="seh:SeHA_C2558"/>
<dbReference type="HOGENOM" id="CLU_144724_0_1_6"/>
<dbReference type="Proteomes" id="UP000001866">
    <property type="component" value="Chromosome"/>
</dbReference>
<dbReference type="GO" id="GO:0030964">
    <property type="term" value="C:NADH dehydrogenase complex"/>
    <property type="evidence" value="ECO:0007669"/>
    <property type="project" value="TreeGrafter"/>
</dbReference>
<dbReference type="GO" id="GO:0005886">
    <property type="term" value="C:plasma membrane"/>
    <property type="evidence" value="ECO:0007669"/>
    <property type="project" value="UniProtKB-SubCell"/>
</dbReference>
<dbReference type="GO" id="GO:0050136">
    <property type="term" value="F:NADH:ubiquinone reductase (non-electrogenic) activity"/>
    <property type="evidence" value="ECO:0007669"/>
    <property type="project" value="UniProtKB-UniRule"/>
</dbReference>
<dbReference type="GO" id="GO:0048038">
    <property type="term" value="F:quinone binding"/>
    <property type="evidence" value="ECO:0007669"/>
    <property type="project" value="UniProtKB-KW"/>
</dbReference>
<dbReference type="GO" id="GO:0042773">
    <property type="term" value="P:ATP synthesis coupled electron transport"/>
    <property type="evidence" value="ECO:0007669"/>
    <property type="project" value="InterPro"/>
</dbReference>
<dbReference type="FunFam" id="1.10.287.3510:FF:000001">
    <property type="entry name" value="NADH-quinone oxidoreductase subunit K"/>
    <property type="match status" value="1"/>
</dbReference>
<dbReference type="Gene3D" id="1.10.287.3510">
    <property type="match status" value="1"/>
</dbReference>
<dbReference type="HAMAP" id="MF_01456">
    <property type="entry name" value="NDH1_NuoK"/>
    <property type="match status" value="1"/>
</dbReference>
<dbReference type="InterPro" id="IPR001133">
    <property type="entry name" value="NADH_UbQ_OxRdtase_chain4L/K"/>
</dbReference>
<dbReference type="InterPro" id="IPR039428">
    <property type="entry name" value="NUOK/Mnh_C1-like"/>
</dbReference>
<dbReference type="NCBIfam" id="NF004319">
    <property type="entry name" value="PRK05715.1-1"/>
    <property type="match status" value="1"/>
</dbReference>
<dbReference type="NCBIfam" id="NF004320">
    <property type="entry name" value="PRK05715.1-2"/>
    <property type="match status" value="1"/>
</dbReference>
<dbReference type="PANTHER" id="PTHR11434:SF16">
    <property type="entry name" value="NADH-UBIQUINONE OXIDOREDUCTASE CHAIN 4L"/>
    <property type="match status" value="1"/>
</dbReference>
<dbReference type="PANTHER" id="PTHR11434">
    <property type="entry name" value="NADH-UBIQUINONE OXIDOREDUCTASE SUBUNIT ND4L"/>
    <property type="match status" value="1"/>
</dbReference>
<dbReference type="Pfam" id="PF00420">
    <property type="entry name" value="Oxidored_q2"/>
    <property type="match status" value="1"/>
</dbReference>
<accession>B4TBI5</accession>
<sequence>MIPLTHGLILAAILFVLGLTGLVIRRNLLFMLIGLEIMINASALAFVVAGSYWGQTDGQVMYILAISLAAAEASIGLALLLQLHRRRQNLNIDSVSEMRG</sequence>
<evidence type="ECO:0000255" key="1">
    <source>
        <dbReference type="HAMAP-Rule" id="MF_01456"/>
    </source>
</evidence>
<organism>
    <name type="scientific">Salmonella heidelberg (strain SL476)</name>
    <dbReference type="NCBI Taxonomy" id="454169"/>
    <lineage>
        <taxon>Bacteria</taxon>
        <taxon>Pseudomonadati</taxon>
        <taxon>Pseudomonadota</taxon>
        <taxon>Gammaproteobacteria</taxon>
        <taxon>Enterobacterales</taxon>
        <taxon>Enterobacteriaceae</taxon>
        <taxon>Salmonella</taxon>
    </lineage>
</organism>
<comment type="function">
    <text evidence="1">NDH-1 shuttles electrons from NADH, via FMN and iron-sulfur (Fe-S) centers, to quinones in the respiratory chain. The immediate electron acceptor for the enzyme in this species is believed to be ubiquinone. Couples the redox reaction to proton translocation (for every two electrons transferred, four hydrogen ions are translocated across the cytoplasmic membrane), and thus conserves the redox energy in a proton gradient.</text>
</comment>
<comment type="catalytic activity">
    <reaction evidence="1">
        <text>a quinone + NADH + 5 H(+)(in) = a quinol + NAD(+) + 4 H(+)(out)</text>
        <dbReference type="Rhea" id="RHEA:57888"/>
        <dbReference type="ChEBI" id="CHEBI:15378"/>
        <dbReference type="ChEBI" id="CHEBI:24646"/>
        <dbReference type="ChEBI" id="CHEBI:57540"/>
        <dbReference type="ChEBI" id="CHEBI:57945"/>
        <dbReference type="ChEBI" id="CHEBI:132124"/>
    </reaction>
</comment>
<comment type="subunit">
    <text evidence="1">NDH-1 is composed of 13 different subunits. Subunits NuoA, H, J, K, L, M, N constitute the membrane sector of the complex.</text>
</comment>
<comment type="subcellular location">
    <subcellularLocation>
        <location evidence="1">Cell inner membrane</location>
        <topology evidence="1">Multi-pass membrane protein</topology>
    </subcellularLocation>
</comment>
<comment type="similarity">
    <text evidence="1">Belongs to the complex I subunit 4L family.</text>
</comment>
<name>NUOK_SALHS</name>
<protein>
    <recommendedName>
        <fullName evidence="1">NADH-quinone oxidoreductase subunit K</fullName>
        <ecNumber evidence="1">7.1.1.-</ecNumber>
    </recommendedName>
    <alternativeName>
        <fullName evidence="1">NADH dehydrogenase I subunit K</fullName>
    </alternativeName>
    <alternativeName>
        <fullName evidence="1">NDH-1 subunit K</fullName>
    </alternativeName>
</protein>